<accession>Q1R7U8</accession>
<feature type="chain" id="PRO_1000004817" description="Protein-L-isoaspartate O-methyltransferase">
    <location>
        <begin position="1"/>
        <end position="208"/>
    </location>
</feature>
<feature type="active site" evidence="1">
    <location>
        <position position="59"/>
    </location>
</feature>
<protein>
    <recommendedName>
        <fullName evidence="1">Protein-L-isoaspartate O-methyltransferase</fullName>
        <ecNumber evidence="1">2.1.1.77</ecNumber>
    </recommendedName>
    <alternativeName>
        <fullName evidence="1">L-isoaspartyl protein carboxyl methyltransferase</fullName>
    </alternativeName>
    <alternativeName>
        <fullName evidence="1">Protein L-isoaspartyl methyltransferase</fullName>
    </alternativeName>
    <alternativeName>
        <fullName evidence="1">Protein-beta-aspartate methyltransferase</fullName>
        <shortName evidence="1">PIMT</shortName>
    </alternativeName>
</protein>
<proteinExistence type="inferred from homology"/>
<comment type="function">
    <text evidence="1">Catalyzes the methyl esterification of L-isoaspartyl residues in peptides and proteins that result from spontaneous decomposition of normal L-aspartyl and L-asparaginyl residues. It plays a role in the repair and/or degradation of damaged proteins.</text>
</comment>
<comment type="catalytic activity">
    <reaction evidence="1">
        <text>[protein]-L-isoaspartate + S-adenosyl-L-methionine = [protein]-L-isoaspartate alpha-methyl ester + S-adenosyl-L-homocysteine</text>
        <dbReference type="Rhea" id="RHEA:12705"/>
        <dbReference type="Rhea" id="RHEA-COMP:12143"/>
        <dbReference type="Rhea" id="RHEA-COMP:12144"/>
        <dbReference type="ChEBI" id="CHEBI:57856"/>
        <dbReference type="ChEBI" id="CHEBI:59789"/>
        <dbReference type="ChEBI" id="CHEBI:90596"/>
        <dbReference type="ChEBI" id="CHEBI:90598"/>
        <dbReference type="EC" id="2.1.1.77"/>
    </reaction>
</comment>
<comment type="subcellular location">
    <subcellularLocation>
        <location evidence="1">Cytoplasm</location>
    </subcellularLocation>
</comment>
<comment type="similarity">
    <text evidence="1">Belongs to the methyltransferase superfamily. L-isoaspartyl/D-aspartyl protein methyltransferase family.</text>
</comment>
<keyword id="KW-0963">Cytoplasm</keyword>
<keyword id="KW-0489">Methyltransferase</keyword>
<keyword id="KW-0949">S-adenosyl-L-methionine</keyword>
<keyword id="KW-0808">Transferase</keyword>
<reference key="1">
    <citation type="journal article" date="2006" name="Proc. Natl. Acad. Sci. U.S.A.">
        <title>Identification of genes subject to positive selection in uropathogenic strains of Escherichia coli: a comparative genomics approach.</title>
        <authorList>
            <person name="Chen S.L."/>
            <person name="Hung C.-S."/>
            <person name="Xu J."/>
            <person name="Reigstad C.S."/>
            <person name="Magrini V."/>
            <person name="Sabo A."/>
            <person name="Blasiar D."/>
            <person name="Bieri T."/>
            <person name="Meyer R.R."/>
            <person name="Ozersky P."/>
            <person name="Armstrong J.R."/>
            <person name="Fulton R.S."/>
            <person name="Latreille J.P."/>
            <person name="Spieth J."/>
            <person name="Hooton T.M."/>
            <person name="Mardis E.R."/>
            <person name="Hultgren S.J."/>
            <person name="Gordon J.I."/>
        </authorList>
    </citation>
    <scope>NUCLEOTIDE SEQUENCE [LARGE SCALE GENOMIC DNA]</scope>
    <source>
        <strain>UTI89 / UPEC</strain>
    </source>
</reference>
<sequence>MVSRRVQALLDQLRAQGIQDELVLNALAAVPREKFVDEAFEQKAWDNIALPIGQGQTISQPYMVARMTELLELTPQSRVLEIGTGSGYQTAILAHLVQHVCSVERIKGLQWQARRRLKNLDLHNVSTRHGDGWQGWQARAPFDAIIVTAAPPEIPTALMTQLDEGGILVLPVGEEHQYLKRVRRRGGEFIIDTVEAVRFVPLVKGELA</sequence>
<name>PIMT_ECOUT</name>
<dbReference type="EC" id="2.1.1.77" evidence="1"/>
<dbReference type="EMBL" id="CP000243">
    <property type="protein sequence ID" value="ABE08566.1"/>
    <property type="molecule type" value="Genomic_DNA"/>
</dbReference>
<dbReference type="RefSeq" id="WP_000254701.1">
    <property type="nucleotide sequence ID" value="NZ_CP064825.1"/>
</dbReference>
<dbReference type="SMR" id="Q1R7U8"/>
<dbReference type="KEGG" id="eci:UTI89_C3114"/>
<dbReference type="HOGENOM" id="CLU_055432_2_0_6"/>
<dbReference type="Proteomes" id="UP000001952">
    <property type="component" value="Chromosome"/>
</dbReference>
<dbReference type="GO" id="GO:0005737">
    <property type="term" value="C:cytoplasm"/>
    <property type="evidence" value="ECO:0007669"/>
    <property type="project" value="UniProtKB-SubCell"/>
</dbReference>
<dbReference type="GO" id="GO:0004719">
    <property type="term" value="F:protein-L-isoaspartate (D-aspartate) O-methyltransferase activity"/>
    <property type="evidence" value="ECO:0007669"/>
    <property type="project" value="UniProtKB-UniRule"/>
</dbReference>
<dbReference type="GO" id="GO:0032259">
    <property type="term" value="P:methylation"/>
    <property type="evidence" value="ECO:0007669"/>
    <property type="project" value="UniProtKB-KW"/>
</dbReference>
<dbReference type="GO" id="GO:0036211">
    <property type="term" value="P:protein modification process"/>
    <property type="evidence" value="ECO:0007669"/>
    <property type="project" value="UniProtKB-UniRule"/>
</dbReference>
<dbReference type="GO" id="GO:0030091">
    <property type="term" value="P:protein repair"/>
    <property type="evidence" value="ECO:0007669"/>
    <property type="project" value="UniProtKB-UniRule"/>
</dbReference>
<dbReference type="CDD" id="cd02440">
    <property type="entry name" value="AdoMet_MTases"/>
    <property type="match status" value="1"/>
</dbReference>
<dbReference type="FunFam" id="3.40.50.150:FF:000010">
    <property type="entry name" value="Protein-L-isoaspartate O-methyltransferase"/>
    <property type="match status" value="1"/>
</dbReference>
<dbReference type="Gene3D" id="3.40.50.150">
    <property type="entry name" value="Vaccinia Virus protein VP39"/>
    <property type="match status" value="1"/>
</dbReference>
<dbReference type="HAMAP" id="MF_00090">
    <property type="entry name" value="PIMT"/>
    <property type="match status" value="1"/>
</dbReference>
<dbReference type="InterPro" id="IPR000682">
    <property type="entry name" value="PCMT"/>
</dbReference>
<dbReference type="InterPro" id="IPR029063">
    <property type="entry name" value="SAM-dependent_MTases_sf"/>
</dbReference>
<dbReference type="NCBIfam" id="TIGR00080">
    <property type="entry name" value="pimt"/>
    <property type="match status" value="1"/>
</dbReference>
<dbReference type="NCBIfam" id="NF001453">
    <property type="entry name" value="PRK00312.1"/>
    <property type="match status" value="1"/>
</dbReference>
<dbReference type="PANTHER" id="PTHR11579">
    <property type="entry name" value="PROTEIN-L-ISOASPARTATE O-METHYLTRANSFERASE"/>
    <property type="match status" value="1"/>
</dbReference>
<dbReference type="PANTHER" id="PTHR11579:SF0">
    <property type="entry name" value="PROTEIN-L-ISOASPARTATE(D-ASPARTATE) O-METHYLTRANSFERASE"/>
    <property type="match status" value="1"/>
</dbReference>
<dbReference type="Pfam" id="PF01135">
    <property type="entry name" value="PCMT"/>
    <property type="match status" value="1"/>
</dbReference>
<dbReference type="SUPFAM" id="SSF53335">
    <property type="entry name" value="S-adenosyl-L-methionine-dependent methyltransferases"/>
    <property type="match status" value="1"/>
</dbReference>
<dbReference type="PROSITE" id="PS01279">
    <property type="entry name" value="PCMT"/>
    <property type="match status" value="1"/>
</dbReference>
<gene>
    <name evidence="1" type="primary">pcm</name>
    <name type="ordered locus">UTI89_C3114</name>
</gene>
<organism>
    <name type="scientific">Escherichia coli (strain UTI89 / UPEC)</name>
    <dbReference type="NCBI Taxonomy" id="364106"/>
    <lineage>
        <taxon>Bacteria</taxon>
        <taxon>Pseudomonadati</taxon>
        <taxon>Pseudomonadota</taxon>
        <taxon>Gammaproteobacteria</taxon>
        <taxon>Enterobacterales</taxon>
        <taxon>Enterobacteriaceae</taxon>
        <taxon>Escherichia</taxon>
    </lineage>
</organism>
<evidence type="ECO:0000255" key="1">
    <source>
        <dbReference type="HAMAP-Rule" id="MF_00090"/>
    </source>
</evidence>